<accession>Q7V1R9</accession>
<protein>
    <recommendedName>
        <fullName evidence="1">3-isopropylmalate dehydrogenase</fullName>
        <ecNumber evidence="1">1.1.1.85</ecNumber>
    </recommendedName>
    <alternativeName>
        <fullName evidence="1">3-IPM-DH</fullName>
    </alternativeName>
    <alternativeName>
        <fullName evidence="1">Beta-IPM dehydrogenase</fullName>
        <shortName evidence="1">IMDH</shortName>
    </alternativeName>
</protein>
<organism>
    <name type="scientific">Prochlorococcus marinus subsp. pastoris (strain CCMP1986 / NIES-2087 / MED4)</name>
    <dbReference type="NCBI Taxonomy" id="59919"/>
    <lineage>
        <taxon>Bacteria</taxon>
        <taxon>Bacillati</taxon>
        <taxon>Cyanobacteriota</taxon>
        <taxon>Cyanophyceae</taxon>
        <taxon>Synechococcales</taxon>
        <taxon>Prochlorococcaceae</taxon>
        <taxon>Prochlorococcus</taxon>
    </lineage>
</organism>
<feature type="chain" id="PRO_0000083725" description="3-isopropylmalate dehydrogenase">
    <location>
        <begin position="1"/>
        <end position="357"/>
    </location>
</feature>
<feature type="binding site" evidence="1">
    <location>
        <position position="97"/>
    </location>
    <ligand>
        <name>substrate</name>
    </ligand>
</feature>
<feature type="binding site" evidence="1">
    <location>
        <position position="107"/>
    </location>
    <ligand>
        <name>substrate</name>
    </ligand>
</feature>
<feature type="binding site" evidence="1">
    <location>
        <position position="135"/>
    </location>
    <ligand>
        <name>substrate</name>
    </ligand>
</feature>
<feature type="binding site" evidence="1">
    <location>
        <position position="224"/>
    </location>
    <ligand>
        <name>Mg(2+)</name>
        <dbReference type="ChEBI" id="CHEBI:18420"/>
    </ligand>
</feature>
<feature type="binding site" evidence="1">
    <location>
        <position position="224"/>
    </location>
    <ligand>
        <name>substrate</name>
    </ligand>
</feature>
<feature type="binding site" evidence="1">
    <location>
        <position position="248"/>
    </location>
    <ligand>
        <name>Mg(2+)</name>
        <dbReference type="ChEBI" id="CHEBI:18420"/>
    </ligand>
</feature>
<feature type="binding site" evidence="1">
    <location>
        <position position="252"/>
    </location>
    <ligand>
        <name>Mg(2+)</name>
        <dbReference type="ChEBI" id="CHEBI:18420"/>
    </ligand>
</feature>
<feature type="binding site" evidence="1">
    <location>
        <begin position="282"/>
        <end position="294"/>
    </location>
    <ligand>
        <name>NAD(+)</name>
        <dbReference type="ChEBI" id="CHEBI:57540"/>
    </ligand>
</feature>
<feature type="site" description="Important for catalysis" evidence="1">
    <location>
        <position position="142"/>
    </location>
</feature>
<feature type="site" description="Important for catalysis" evidence="1">
    <location>
        <position position="192"/>
    </location>
</feature>
<evidence type="ECO:0000255" key="1">
    <source>
        <dbReference type="HAMAP-Rule" id="MF_01033"/>
    </source>
</evidence>
<reference key="1">
    <citation type="journal article" date="2003" name="Nature">
        <title>Genome divergence in two Prochlorococcus ecotypes reflects oceanic niche differentiation.</title>
        <authorList>
            <person name="Rocap G."/>
            <person name="Larimer F.W."/>
            <person name="Lamerdin J.E."/>
            <person name="Malfatti S."/>
            <person name="Chain P."/>
            <person name="Ahlgren N.A."/>
            <person name="Arellano A."/>
            <person name="Coleman M."/>
            <person name="Hauser L."/>
            <person name="Hess W.R."/>
            <person name="Johnson Z.I."/>
            <person name="Land M.L."/>
            <person name="Lindell D."/>
            <person name="Post A.F."/>
            <person name="Regala W."/>
            <person name="Shah M."/>
            <person name="Shaw S.L."/>
            <person name="Steglich C."/>
            <person name="Sullivan M.B."/>
            <person name="Ting C.S."/>
            <person name="Tolonen A."/>
            <person name="Webb E.A."/>
            <person name="Zinser E.R."/>
            <person name="Chisholm S.W."/>
        </authorList>
    </citation>
    <scope>NUCLEOTIDE SEQUENCE [LARGE SCALE GENOMIC DNA]</scope>
    <source>
        <strain>CCMP1986 / NIES-2087 / MED4</strain>
    </source>
</reference>
<sequence length="357" mass="39033">MKRYKVVLLSGDGIGPEISEISITILKKLSKKYGFNLDIKEEYFGGIAYEKHNDPAPKETLDQCKASDAVLLACVGDVKYDTLPRELRPESGLLKLREALNLFANIRPVKIRKSLLDSSSFKKEVIENVDLIVVRELIGGIYFGQPRGEITQTKIKKAFNTMVYDSNEIERITEVAIKIANQRSKKICSVDKSNVLEVSQLWRDTVSLVASKENDLALSNMYVDNAAMQLVKDPGQFDVILTSNLFGDILSDLAAMITGSIGMLPSASLSNSGPGVFEPVHGSAPDIAGKNIANPIAMALSTSMMLKIGLNEIEAADDIEIAIDNVLSKGYRTSDLDNGNCQVLSCSEIGEKIIQEI</sequence>
<comment type="function">
    <text evidence="1">Catalyzes the oxidation of 3-carboxy-2-hydroxy-4-methylpentanoate (3-isopropylmalate) to 3-carboxy-4-methyl-2-oxopentanoate. The product decarboxylates to 4-methyl-2 oxopentanoate.</text>
</comment>
<comment type="catalytic activity">
    <reaction evidence="1">
        <text>(2R,3S)-3-isopropylmalate + NAD(+) = 4-methyl-2-oxopentanoate + CO2 + NADH</text>
        <dbReference type="Rhea" id="RHEA:32271"/>
        <dbReference type="ChEBI" id="CHEBI:16526"/>
        <dbReference type="ChEBI" id="CHEBI:17865"/>
        <dbReference type="ChEBI" id="CHEBI:35121"/>
        <dbReference type="ChEBI" id="CHEBI:57540"/>
        <dbReference type="ChEBI" id="CHEBI:57945"/>
        <dbReference type="EC" id="1.1.1.85"/>
    </reaction>
</comment>
<comment type="cofactor">
    <cofactor evidence="1">
        <name>Mg(2+)</name>
        <dbReference type="ChEBI" id="CHEBI:18420"/>
    </cofactor>
    <cofactor evidence="1">
        <name>Mn(2+)</name>
        <dbReference type="ChEBI" id="CHEBI:29035"/>
    </cofactor>
    <text evidence="1">Binds 1 Mg(2+) or Mn(2+) ion per subunit.</text>
</comment>
<comment type="pathway">
    <text evidence="1">Amino-acid biosynthesis; L-leucine biosynthesis; L-leucine from 3-methyl-2-oxobutanoate: step 3/4.</text>
</comment>
<comment type="subunit">
    <text evidence="1">Homodimer.</text>
</comment>
<comment type="subcellular location">
    <subcellularLocation>
        <location evidence="1">Cytoplasm</location>
    </subcellularLocation>
</comment>
<comment type="similarity">
    <text evidence="1">Belongs to the isocitrate and isopropylmalate dehydrogenases family. LeuB type 1 subfamily.</text>
</comment>
<dbReference type="EC" id="1.1.1.85" evidence="1"/>
<dbReference type="EMBL" id="BX548174">
    <property type="protein sequence ID" value="CAE19245.1"/>
    <property type="molecule type" value="Genomic_DNA"/>
</dbReference>
<dbReference type="RefSeq" id="WP_011132420.1">
    <property type="nucleotide sequence ID" value="NC_005072.1"/>
</dbReference>
<dbReference type="SMR" id="Q7V1R9"/>
<dbReference type="STRING" id="59919.PMM0786"/>
<dbReference type="KEGG" id="pmm:PMM0786"/>
<dbReference type="eggNOG" id="COG0473">
    <property type="taxonomic scope" value="Bacteria"/>
</dbReference>
<dbReference type="HOGENOM" id="CLU_031953_0_3_3"/>
<dbReference type="OrthoDB" id="9806254at2"/>
<dbReference type="UniPathway" id="UPA00048">
    <property type="reaction ID" value="UER00072"/>
</dbReference>
<dbReference type="Proteomes" id="UP000001026">
    <property type="component" value="Chromosome"/>
</dbReference>
<dbReference type="GO" id="GO:0005829">
    <property type="term" value="C:cytosol"/>
    <property type="evidence" value="ECO:0007669"/>
    <property type="project" value="TreeGrafter"/>
</dbReference>
<dbReference type="GO" id="GO:0003862">
    <property type="term" value="F:3-isopropylmalate dehydrogenase activity"/>
    <property type="evidence" value="ECO:0007669"/>
    <property type="project" value="UniProtKB-UniRule"/>
</dbReference>
<dbReference type="GO" id="GO:0000287">
    <property type="term" value="F:magnesium ion binding"/>
    <property type="evidence" value="ECO:0007669"/>
    <property type="project" value="InterPro"/>
</dbReference>
<dbReference type="GO" id="GO:0051287">
    <property type="term" value="F:NAD binding"/>
    <property type="evidence" value="ECO:0007669"/>
    <property type="project" value="InterPro"/>
</dbReference>
<dbReference type="GO" id="GO:0009098">
    <property type="term" value="P:L-leucine biosynthetic process"/>
    <property type="evidence" value="ECO:0007669"/>
    <property type="project" value="UniProtKB-UniRule"/>
</dbReference>
<dbReference type="FunFam" id="3.40.718.10:FF:000028">
    <property type="entry name" value="3-isopropylmalate dehydrogenase"/>
    <property type="match status" value="1"/>
</dbReference>
<dbReference type="Gene3D" id="3.40.718.10">
    <property type="entry name" value="Isopropylmalate Dehydrogenase"/>
    <property type="match status" value="1"/>
</dbReference>
<dbReference type="HAMAP" id="MF_01033">
    <property type="entry name" value="LeuB_type1"/>
    <property type="match status" value="1"/>
</dbReference>
<dbReference type="InterPro" id="IPR019818">
    <property type="entry name" value="IsoCit/isopropylmalate_DH_CS"/>
</dbReference>
<dbReference type="InterPro" id="IPR024084">
    <property type="entry name" value="IsoPropMal-DH-like_dom"/>
</dbReference>
<dbReference type="InterPro" id="IPR004429">
    <property type="entry name" value="Isopropylmalate_DH"/>
</dbReference>
<dbReference type="NCBIfam" id="TIGR00169">
    <property type="entry name" value="leuB"/>
    <property type="match status" value="1"/>
</dbReference>
<dbReference type="PANTHER" id="PTHR42979">
    <property type="entry name" value="3-ISOPROPYLMALATE DEHYDROGENASE"/>
    <property type="match status" value="1"/>
</dbReference>
<dbReference type="PANTHER" id="PTHR42979:SF1">
    <property type="entry name" value="3-ISOPROPYLMALATE DEHYDROGENASE"/>
    <property type="match status" value="1"/>
</dbReference>
<dbReference type="Pfam" id="PF00180">
    <property type="entry name" value="Iso_dh"/>
    <property type="match status" value="1"/>
</dbReference>
<dbReference type="SMART" id="SM01329">
    <property type="entry name" value="Iso_dh"/>
    <property type="match status" value="1"/>
</dbReference>
<dbReference type="SUPFAM" id="SSF53659">
    <property type="entry name" value="Isocitrate/Isopropylmalate dehydrogenase-like"/>
    <property type="match status" value="1"/>
</dbReference>
<dbReference type="PROSITE" id="PS00470">
    <property type="entry name" value="IDH_IMDH"/>
    <property type="match status" value="1"/>
</dbReference>
<name>LEU3_PROMP</name>
<gene>
    <name evidence="1" type="primary">leuB</name>
    <name type="ordered locus">PMM0786</name>
</gene>
<proteinExistence type="inferred from homology"/>
<keyword id="KW-0028">Amino-acid biosynthesis</keyword>
<keyword id="KW-0100">Branched-chain amino acid biosynthesis</keyword>
<keyword id="KW-0963">Cytoplasm</keyword>
<keyword id="KW-0432">Leucine biosynthesis</keyword>
<keyword id="KW-0460">Magnesium</keyword>
<keyword id="KW-0464">Manganese</keyword>
<keyword id="KW-0479">Metal-binding</keyword>
<keyword id="KW-0520">NAD</keyword>
<keyword id="KW-0560">Oxidoreductase</keyword>